<evidence type="ECO:0000250" key="1"/>
<evidence type="ECO:0000250" key="2">
    <source>
        <dbReference type="UniProtKB" id="Q08AH1"/>
    </source>
</evidence>
<evidence type="ECO:0000250" key="3">
    <source>
        <dbReference type="UniProtKB" id="Q8BGA8"/>
    </source>
</evidence>
<evidence type="ECO:0000250" key="4">
    <source>
        <dbReference type="UniProtKB" id="Q91VA0"/>
    </source>
</evidence>
<evidence type="ECO:0000255" key="5"/>
<evidence type="ECO:0000269" key="6">
    <source>
    </source>
</evidence>
<evidence type="ECO:0000303" key="7">
    <source>
    </source>
</evidence>
<evidence type="ECO:0000305" key="8"/>
<feature type="transit peptide" description="Mitochondrion" evidence="5">
    <location>
        <begin position="1"/>
        <end position="26"/>
    </location>
</feature>
<feature type="chain" id="PRO_0000306101" description="Acyl-coenzyme A synthetase ACSM5, mitochondrial">
    <location>
        <begin position="27"/>
        <end position="579"/>
    </location>
</feature>
<feature type="binding site" evidence="1">
    <location>
        <begin position="230"/>
        <end position="238"/>
    </location>
    <ligand>
        <name>ATP</name>
        <dbReference type="ChEBI" id="CHEBI:30616"/>
    </ligand>
</feature>
<feature type="binding site" evidence="1">
    <location>
        <begin position="368"/>
        <end position="373"/>
    </location>
    <ligand>
        <name>ATP</name>
        <dbReference type="ChEBI" id="CHEBI:30616"/>
    </ligand>
</feature>
<feature type="binding site" evidence="1">
    <location>
        <position position="455"/>
    </location>
    <ligand>
        <name>ATP</name>
        <dbReference type="ChEBI" id="CHEBI:30616"/>
    </ligand>
</feature>
<feature type="binding site" evidence="1">
    <location>
        <position position="470"/>
    </location>
    <ligand>
        <name>ATP</name>
        <dbReference type="ChEBI" id="CHEBI:30616"/>
    </ligand>
</feature>
<feature type="binding site" evidence="1">
    <location>
        <position position="566"/>
    </location>
    <ligand>
        <name>ATP</name>
        <dbReference type="ChEBI" id="CHEBI:30616"/>
    </ligand>
</feature>
<feature type="modified residue" description="N6-acetyllysine; alternate" evidence="3">
    <location>
        <position position="97"/>
    </location>
</feature>
<feature type="modified residue" description="N6-succinyllysine; alternate" evidence="3">
    <location>
        <position position="97"/>
    </location>
</feature>
<feature type="modified residue" description="N6-acetyllysine" evidence="3">
    <location>
        <position position="152"/>
    </location>
</feature>
<feature type="modified residue" description="N6-acetyllysine; alternate" evidence="3">
    <location>
        <position position="303"/>
    </location>
</feature>
<feature type="modified residue" description="N6-succinyllysine; alternate" evidence="3">
    <location>
        <position position="303"/>
    </location>
</feature>
<feature type="splice variant" id="VSP_028398" description="In isoform 2." evidence="7">
    <location>
        <begin position="209"/>
        <end position="579"/>
    </location>
</feature>
<feature type="sequence variant" id="VAR_055495" description="In dbSNP:rs9928053.">
    <original>R</original>
    <variation>Q</variation>
    <location>
        <position position="65"/>
    </location>
</feature>
<feature type="sequence variant" id="VAR_035252" description="In dbSNP:rs559741756." evidence="6">
    <original>Q</original>
    <variation>H</variation>
    <location>
        <position position="159"/>
    </location>
</feature>
<feature type="sequence variant" id="VAR_055496" description="In dbSNP:rs7192210.">
    <original>E</original>
    <variation>K</variation>
    <location>
        <position position="182"/>
    </location>
</feature>
<feature type="sequence variant" id="VAR_061011" description="In dbSNP:rs59025904.">
    <original>M</original>
    <variation>V</variation>
    <location>
        <position position="217"/>
    </location>
</feature>
<feature type="sequence variant" id="VAR_035253" description="In dbSNP:rs8062344." evidence="6">
    <original>P</original>
    <variation>R</variation>
    <location>
        <position position="352"/>
    </location>
</feature>
<feature type="sequence variant" id="VAR_035254" description="In dbSNP:rs12931877." evidence="6">
    <original>H</original>
    <variation>R</variation>
    <location>
        <position position="360"/>
    </location>
</feature>
<feature type="sequence variant" id="VAR_035255" description="In dbSNP:rs554734865." evidence="6">
    <original>T</original>
    <variation>M</variation>
    <location>
        <position position="533"/>
    </location>
</feature>
<feature type="sequence conflict" description="In Ref. 3; AAH16703." evidence="8" ref="3">
    <original>M</original>
    <variation>V</variation>
    <location>
        <position position="142"/>
    </location>
</feature>
<feature type="sequence conflict" description="In Ref. 1; BAA91273." evidence="8" ref="1">
    <original>SGTT</original>
    <variation>KREPP</variation>
    <location>
        <begin position="231"/>
        <end position="234"/>
    </location>
</feature>
<feature type="sequence conflict" description="In Ref. 3; AAH68516." evidence="8" ref="3">
    <original>V</original>
    <variation>A</variation>
    <location>
        <position position="502"/>
    </location>
</feature>
<proteinExistence type="evidence at protein level"/>
<name>ACSM5_HUMAN</name>
<sequence length="579" mass="64760">MRPWLRHLVLQALRNSRAFCGSHGKPAPLPVPQKIVATWEAISLGRQLVPEYFNFAHDVLDVWSRLEEAGHRPPNPAFWWVNGTGAEIKWSFEELGKQSRKAANVLGGACGLQPGDRMMLVLPRLPEWWLVSVACMRTGTVMIPGVTQLTEKDLKYRLQASRAKSIITSDSLAPRVDAISAECPSLQTKLLVSDSSRPGWLNFRELLREASTEHNCMRTKSRDPLAIYFTSGTTGAPKMVEHSQSSYGLGFVASGRRWVALTESDIFWNTTDTGWVKAAWTLFSAWPNGSCIFVHELPRVDAKVILNTLSKFPITTLCCVPTIFRLLVQEDLTRYQFQSLRHCLTGGEALNPDVREKWKHQTGVELYEGYGQSETVVICANPKGMKIKSGSMGKASPPYDVQIVDDEGNVLPPGEEGNVAVRIRPTRPFCFFNCYLDNPEKTAASEQGDFYITGDRARMDKDGYFWFMGRNDDVINSSSYRIGPVEVESALAEHPAVLESAVVSSPDPIRGEVVKAFIVLTPAYSSHDPEALTRELQEHVKRVTAPYKYPRKVAFVSELPKTVSGKIQRSKLRSQEWGK</sequence>
<reference key="1">
    <citation type="journal article" date="2004" name="Nat. Genet.">
        <title>Complete sequencing and characterization of 21,243 full-length human cDNAs.</title>
        <authorList>
            <person name="Ota T."/>
            <person name="Suzuki Y."/>
            <person name="Nishikawa T."/>
            <person name="Otsuki T."/>
            <person name="Sugiyama T."/>
            <person name="Irie R."/>
            <person name="Wakamatsu A."/>
            <person name="Hayashi K."/>
            <person name="Sato H."/>
            <person name="Nagai K."/>
            <person name="Kimura K."/>
            <person name="Makita H."/>
            <person name="Sekine M."/>
            <person name="Obayashi M."/>
            <person name="Nishi T."/>
            <person name="Shibahara T."/>
            <person name="Tanaka T."/>
            <person name="Ishii S."/>
            <person name="Yamamoto J."/>
            <person name="Saito K."/>
            <person name="Kawai Y."/>
            <person name="Isono Y."/>
            <person name="Nakamura Y."/>
            <person name="Nagahari K."/>
            <person name="Murakami K."/>
            <person name="Yasuda T."/>
            <person name="Iwayanagi T."/>
            <person name="Wagatsuma M."/>
            <person name="Shiratori A."/>
            <person name="Sudo H."/>
            <person name="Hosoiri T."/>
            <person name="Kaku Y."/>
            <person name="Kodaira H."/>
            <person name="Kondo H."/>
            <person name="Sugawara M."/>
            <person name="Takahashi M."/>
            <person name="Kanda K."/>
            <person name="Yokoi T."/>
            <person name="Furuya T."/>
            <person name="Kikkawa E."/>
            <person name="Omura Y."/>
            <person name="Abe K."/>
            <person name="Kamihara K."/>
            <person name="Katsuta N."/>
            <person name="Sato K."/>
            <person name="Tanikawa M."/>
            <person name="Yamazaki M."/>
            <person name="Ninomiya K."/>
            <person name="Ishibashi T."/>
            <person name="Yamashita H."/>
            <person name="Murakawa K."/>
            <person name="Fujimori K."/>
            <person name="Tanai H."/>
            <person name="Kimata M."/>
            <person name="Watanabe M."/>
            <person name="Hiraoka S."/>
            <person name="Chiba Y."/>
            <person name="Ishida S."/>
            <person name="Ono Y."/>
            <person name="Takiguchi S."/>
            <person name="Watanabe S."/>
            <person name="Yosida M."/>
            <person name="Hotuta T."/>
            <person name="Kusano J."/>
            <person name="Kanehori K."/>
            <person name="Takahashi-Fujii A."/>
            <person name="Hara H."/>
            <person name="Tanase T.-O."/>
            <person name="Nomura Y."/>
            <person name="Togiya S."/>
            <person name="Komai F."/>
            <person name="Hara R."/>
            <person name="Takeuchi K."/>
            <person name="Arita M."/>
            <person name="Imose N."/>
            <person name="Musashino K."/>
            <person name="Yuuki H."/>
            <person name="Oshima A."/>
            <person name="Sasaki N."/>
            <person name="Aotsuka S."/>
            <person name="Yoshikawa Y."/>
            <person name="Matsunawa H."/>
            <person name="Ichihara T."/>
            <person name="Shiohata N."/>
            <person name="Sano S."/>
            <person name="Moriya S."/>
            <person name="Momiyama H."/>
            <person name="Satoh N."/>
            <person name="Takami S."/>
            <person name="Terashima Y."/>
            <person name="Suzuki O."/>
            <person name="Nakagawa S."/>
            <person name="Senoh A."/>
            <person name="Mizoguchi H."/>
            <person name="Goto Y."/>
            <person name="Shimizu F."/>
            <person name="Wakebe H."/>
            <person name="Hishigaki H."/>
            <person name="Watanabe T."/>
            <person name="Sugiyama A."/>
            <person name="Takemoto M."/>
            <person name="Kawakami B."/>
            <person name="Yamazaki M."/>
            <person name="Watanabe K."/>
            <person name="Kumagai A."/>
            <person name="Itakura S."/>
            <person name="Fukuzumi Y."/>
            <person name="Fujimori Y."/>
            <person name="Komiyama M."/>
            <person name="Tashiro H."/>
            <person name="Tanigami A."/>
            <person name="Fujiwara T."/>
            <person name="Ono T."/>
            <person name="Yamada K."/>
            <person name="Fujii Y."/>
            <person name="Ozaki K."/>
            <person name="Hirao M."/>
            <person name="Ohmori Y."/>
            <person name="Kawabata A."/>
            <person name="Hikiji T."/>
            <person name="Kobatake N."/>
            <person name="Inagaki H."/>
            <person name="Ikema Y."/>
            <person name="Okamoto S."/>
            <person name="Okitani R."/>
            <person name="Kawakami T."/>
            <person name="Noguchi S."/>
            <person name="Itoh T."/>
            <person name="Shigeta K."/>
            <person name="Senba T."/>
            <person name="Matsumura K."/>
            <person name="Nakajima Y."/>
            <person name="Mizuno T."/>
            <person name="Morinaga M."/>
            <person name="Sasaki M."/>
            <person name="Togashi T."/>
            <person name="Oyama M."/>
            <person name="Hata H."/>
            <person name="Watanabe M."/>
            <person name="Komatsu T."/>
            <person name="Mizushima-Sugano J."/>
            <person name="Satoh T."/>
            <person name="Shirai Y."/>
            <person name="Takahashi Y."/>
            <person name="Nakagawa K."/>
            <person name="Okumura K."/>
            <person name="Nagase T."/>
            <person name="Nomura N."/>
            <person name="Kikuchi H."/>
            <person name="Masuho Y."/>
            <person name="Yamashita R."/>
            <person name="Nakai K."/>
            <person name="Yada T."/>
            <person name="Nakamura Y."/>
            <person name="Ohara O."/>
            <person name="Isogai T."/>
            <person name="Sugano S."/>
        </authorList>
    </citation>
    <scope>NUCLEOTIDE SEQUENCE [LARGE SCALE MRNA] (ISOFORM 1)</scope>
</reference>
<reference key="2">
    <citation type="journal article" date="2004" name="Nature">
        <title>The sequence and analysis of duplication-rich human chromosome 16.</title>
        <authorList>
            <person name="Martin J."/>
            <person name="Han C."/>
            <person name="Gordon L.A."/>
            <person name="Terry A."/>
            <person name="Prabhakar S."/>
            <person name="She X."/>
            <person name="Xie G."/>
            <person name="Hellsten U."/>
            <person name="Chan Y.M."/>
            <person name="Altherr M."/>
            <person name="Couronne O."/>
            <person name="Aerts A."/>
            <person name="Bajorek E."/>
            <person name="Black S."/>
            <person name="Blumer H."/>
            <person name="Branscomb E."/>
            <person name="Brown N.C."/>
            <person name="Bruno W.J."/>
            <person name="Buckingham J.M."/>
            <person name="Callen D.F."/>
            <person name="Campbell C.S."/>
            <person name="Campbell M.L."/>
            <person name="Campbell E.W."/>
            <person name="Caoile C."/>
            <person name="Challacombe J.F."/>
            <person name="Chasteen L.A."/>
            <person name="Chertkov O."/>
            <person name="Chi H.C."/>
            <person name="Christensen M."/>
            <person name="Clark L.M."/>
            <person name="Cohn J.D."/>
            <person name="Denys M."/>
            <person name="Detter J.C."/>
            <person name="Dickson M."/>
            <person name="Dimitrijevic-Bussod M."/>
            <person name="Escobar J."/>
            <person name="Fawcett J.J."/>
            <person name="Flowers D."/>
            <person name="Fotopulos D."/>
            <person name="Glavina T."/>
            <person name="Gomez M."/>
            <person name="Gonzales E."/>
            <person name="Goodstein D."/>
            <person name="Goodwin L.A."/>
            <person name="Grady D.L."/>
            <person name="Grigoriev I."/>
            <person name="Groza M."/>
            <person name="Hammon N."/>
            <person name="Hawkins T."/>
            <person name="Haydu L."/>
            <person name="Hildebrand C.E."/>
            <person name="Huang W."/>
            <person name="Israni S."/>
            <person name="Jett J."/>
            <person name="Jewett P.B."/>
            <person name="Kadner K."/>
            <person name="Kimball H."/>
            <person name="Kobayashi A."/>
            <person name="Krawczyk M.-C."/>
            <person name="Leyba T."/>
            <person name="Longmire J.L."/>
            <person name="Lopez F."/>
            <person name="Lou Y."/>
            <person name="Lowry S."/>
            <person name="Ludeman T."/>
            <person name="Manohar C.F."/>
            <person name="Mark G.A."/>
            <person name="McMurray K.L."/>
            <person name="Meincke L.J."/>
            <person name="Morgan J."/>
            <person name="Moyzis R.K."/>
            <person name="Mundt M.O."/>
            <person name="Munk A.C."/>
            <person name="Nandkeshwar R.D."/>
            <person name="Pitluck S."/>
            <person name="Pollard M."/>
            <person name="Predki P."/>
            <person name="Parson-Quintana B."/>
            <person name="Ramirez L."/>
            <person name="Rash S."/>
            <person name="Retterer J."/>
            <person name="Ricke D.O."/>
            <person name="Robinson D.L."/>
            <person name="Rodriguez A."/>
            <person name="Salamov A."/>
            <person name="Saunders E.H."/>
            <person name="Scott D."/>
            <person name="Shough T."/>
            <person name="Stallings R.L."/>
            <person name="Stalvey M."/>
            <person name="Sutherland R.D."/>
            <person name="Tapia R."/>
            <person name="Tesmer J.G."/>
            <person name="Thayer N."/>
            <person name="Thompson L.S."/>
            <person name="Tice H."/>
            <person name="Torney D.C."/>
            <person name="Tran-Gyamfi M."/>
            <person name="Tsai M."/>
            <person name="Ulanovsky L.E."/>
            <person name="Ustaszewska A."/>
            <person name="Vo N."/>
            <person name="White P.S."/>
            <person name="Williams A.L."/>
            <person name="Wills P.L."/>
            <person name="Wu J.-R."/>
            <person name="Wu K."/>
            <person name="Yang J."/>
            <person name="DeJong P."/>
            <person name="Bruce D."/>
            <person name="Doggett N.A."/>
            <person name="Deaven L."/>
            <person name="Schmutz J."/>
            <person name="Grimwood J."/>
            <person name="Richardson P."/>
            <person name="Rokhsar D.S."/>
            <person name="Eichler E.E."/>
            <person name="Gilna P."/>
            <person name="Lucas S.M."/>
            <person name="Myers R.M."/>
            <person name="Rubin E.M."/>
            <person name="Pennacchio L.A."/>
        </authorList>
    </citation>
    <scope>NUCLEOTIDE SEQUENCE [LARGE SCALE GENOMIC DNA]</scope>
</reference>
<reference key="3">
    <citation type="journal article" date="2004" name="Genome Res.">
        <title>The status, quality, and expansion of the NIH full-length cDNA project: the Mammalian Gene Collection (MGC).</title>
        <authorList>
            <consortium name="The MGC Project Team"/>
        </authorList>
    </citation>
    <scope>NUCLEOTIDE SEQUENCE [LARGE SCALE MRNA] (ISOFORMS 1 AND 2)</scope>
    <source>
        <tissue>Brain</tissue>
        <tissue>Kidney</tissue>
    </source>
</reference>
<reference key="4">
    <citation type="journal article" date="2014" name="J. Proteomics">
        <title>An enzyme assisted RP-RPLC approach for in-depth analysis of human liver phosphoproteome.</title>
        <authorList>
            <person name="Bian Y."/>
            <person name="Song C."/>
            <person name="Cheng K."/>
            <person name="Dong M."/>
            <person name="Wang F."/>
            <person name="Huang J."/>
            <person name="Sun D."/>
            <person name="Wang L."/>
            <person name="Ye M."/>
            <person name="Zou H."/>
        </authorList>
    </citation>
    <scope>IDENTIFICATION BY MASS SPECTROMETRY [LARGE SCALE ANALYSIS]</scope>
    <source>
        <tissue>Liver</tissue>
    </source>
</reference>
<reference key="5">
    <citation type="journal article" date="2016" name="Expert Opin. Drug Metab. Toxicol.">
        <title>Xenobiotic/medium chain fatty acid: CoA ligase - a critical review on its role in fatty acid metabolism and the detoxification of benzoic acid and aspirin.</title>
        <authorList>
            <person name="van der Sluis R."/>
            <person name="Erasmus E."/>
        </authorList>
    </citation>
    <scope>REVIEW</scope>
</reference>
<reference key="6">
    <citation type="journal article" date="2003" name="Hypertension">
        <title>An acyl-CoA synthetase gene family in chromosome 16p12 may contribute to multiple risk factors.</title>
        <authorList>
            <person name="Iwai N."/>
            <person name="Mannami T."/>
            <person name="Tomoike H."/>
            <person name="Ono K."/>
            <person name="Iwanaga Y."/>
        </authorList>
    </citation>
    <scope>VARIANTS HIS-159; ARG-352; ARG-360 AND MET-533</scope>
    <scope>TISSUE SPECIFICITY</scope>
</reference>
<organism>
    <name type="scientific">Homo sapiens</name>
    <name type="common">Human</name>
    <dbReference type="NCBI Taxonomy" id="9606"/>
    <lineage>
        <taxon>Eukaryota</taxon>
        <taxon>Metazoa</taxon>
        <taxon>Chordata</taxon>
        <taxon>Craniata</taxon>
        <taxon>Vertebrata</taxon>
        <taxon>Euteleostomi</taxon>
        <taxon>Mammalia</taxon>
        <taxon>Eutheria</taxon>
        <taxon>Euarchontoglires</taxon>
        <taxon>Primates</taxon>
        <taxon>Haplorrhini</taxon>
        <taxon>Catarrhini</taxon>
        <taxon>Hominidae</taxon>
        <taxon>Homo</taxon>
    </lineage>
</organism>
<dbReference type="EC" id="6.2.1.2" evidence="2"/>
<dbReference type="EMBL" id="AK000588">
    <property type="protein sequence ID" value="BAA91273.1"/>
    <property type="status" value="ALT_FRAME"/>
    <property type="molecule type" value="mRNA"/>
</dbReference>
<dbReference type="EMBL" id="AC137056">
    <property type="status" value="NOT_ANNOTATED_CDS"/>
    <property type="molecule type" value="Genomic_DNA"/>
</dbReference>
<dbReference type="EMBL" id="BC013753">
    <property type="protein sequence ID" value="AAH13753.1"/>
    <property type="molecule type" value="mRNA"/>
</dbReference>
<dbReference type="EMBL" id="BC016703">
    <property type="protein sequence ID" value="AAH16703.1"/>
    <property type="molecule type" value="mRNA"/>
</dbReference>
<dbReference type="EMBL" id="BC068516">
    <property type="protein sequence ID" value="AAH68516.1"/>
    <property type="molecule type" value="mRNA"/>
</dbReference>
<dbReference type="CCDS" id="CCDS10585.1">
    <molecule id="Q6NUN0-1"/>
</dbReference>
<dbReference type="CCDS" id="CCDS81954.1">
    <molecule id="Q6NUN0-2"/>
</dbReference>
<dbReference type="RefSeq" id="NP_001311300.1">
    <molecule id="Q6NUN0-1"/>
    <property type="nucleotide sequence ID" value="NM_001324371.2"/>
</dbReference>
<dbReference type="RefSeq" id="NP_001311302.1">
    <molecule id="Q6NUN0-2"/>
    <property type="nucleotide sequence ID" value="NM_001324373.2"/>
</dbReference>
<dbReference type="RefSeq" id="NP_060358.2">
    <molecule id="Q6NUN0-1"/>
    <property type="nucleotide sequence ID" value="NM_017888.2"/>
</dbReference>
<dbReference type="SMR" id="Q6NUN0"/>
<dbReference type="BioGRID" id="120323">
    <property type="interactions" value="58"/>
</dbReference>
<dbReference type="FunCoup" id="Q6NUN0">
    <property type="interactions" value="51"/>
</dbReference>
<dbReference type="IntAct" id="Q6NUN0">
    <property type="interactions" value="54"/>
</dbReference>
<dbReference type="STRING" id="9606.ENSP00000327916"/>
<dbReference type="GlyGen" id="Q6NUN0">
    <property type="glycosylation" value="1 site, 1 O-linked glycan (1 site)"/>
</dbReference>
<dbReference type="iPTMnet" id="Q6NUN0"/>
<dbReference type="PhosphoSitePlus" id="Q6NUN0"/>
<dbReference type="BioMuta" id="ACSM5"/>
<dbReference type="DMDM" id="269849538"/>
<dbReference type="MassIVE" id="Q6NUN0"/>
<dbReference type="PaxDb" id="9606-ENSP00000327916"/>
<dbReference type="PeptideAtlas" id="Q6NUN0"/>
<dbReference type="ProteomicsDB" id="66692">
    <molecule id="Q6NUN0-1"/>
</dbReference>
<dbReference type="ProteomicsDB" id="66693">
    <molecule id="Q6NUN0-2"/>
</dbReference>
<dbReference type="Antibodypedia" id="25526">
    <property type="antibodies" value="112 antibodies from 18 providers"/>
</dbReference>
<dbReference type="DNASU" id="54988"/>
<dbReference type="Ensembl" id="ENST00000331849.8">
    <molecule id="Q6NUN0-1"/>
    <property type="protein sequence ID" value="ENSP00000327916.4"/>
    <property type="gene ID" value="ENSG00000183549.10"/>
</dbReference>
<dbReference type="Ensembl" id="ENST00000575584.5">
    <molecule id="Q6NUN0-2"/>
    <property type="protein sequence ID" value="ENSP00000460112.1"/>
    <property type="gene ID" value="ENSG00000183549.10"/>
</dbReference>
<dbReference type="GeneID" id="54988"/>
<dbReference type="KEGG" id="hsa:54988"/>
<dbReference type="MANE-Select" id="ENST00000331849.8">
    <property type="protein sequence ID" value="ENSP00000327916.4"/>
    <property type="RefSeq nucleotide sequence ID" value="NM_017888.3"/>
    <property type="RefSeq protein sequence ID" value="NP_060358.2"/>
</dbReference>
<dbReference type="UCSC" id="uc002dhd.1">
    <molecule id="Q6NUN0-1"/>
    <property type="organism name" value="human"/>
</dbReference>
<dbReference type="AGR" id="HGNC:26060"/>
<dbReference type="CTD" id="54988"/>
<dbReference type="DisGeNET" id="54988"/>
<dbReference type="GeneCards" id="ACSM5"/>
<dbReference type="HGNC" id="HGNC:26060">
    <property type="gene designation" value="ACSM5"/>
</dbReference>
<dbReference type="HPA" id="ENSG00000183549">
    <property type="expression patterns" value="Tissue enriched (liver)"/>
</dbReference>
<dbReference type="MIM" id="614361">
    <property type="type" value="gene"/>
</dbReference>
<dbReference type="neXtProt" id="NX_Q6NUN0"/>
<dbReference type="OpenTargets" id="ENSG00000183549"/>
<dbReference type="PharmGKB" id="PA162375501"/>
<dbReference type="VEuPathDB" id="HostDB:ENSG00000183549"/>
<dbReference type="eggNOG" id="KOG1175">
    <property type="taxonomic scope" value="Eukaryota"/>
</dbReference>
<dbReference type="GeneTree" id="ENSGT00940000161148"/>
<dbReference type="HOGENOM" id="CLU_088808_0_0_1"/>
<dbReference type="InParanoid" id="Q6NUN0"/>
<dbReference type="OMA" id="PFNWALD"/>
<dbReference type="OrthoDB" id="6614653at2759"/>
<dbReference type="PAN-GO" id="Q6NUN0">
    <property type="GO annotations" value="5 GO annotations based on evolutionary models"/>
</dbReference>
<dbReference type="PhylomeDB" id="Q6NUN0"/>
<dbReference type="TreeFam" id="TF354287"/>
<dbReference type="PathwayCommons" id="Q6NUN0"/>
<dbReference type="Reactome" id="R-HSA-177128">
    <property type="pathway name" value="Conjugation of salicylate with glycine"/>
</dbReference>
<dbReference type="Reactome" id="R-HSA-9749641">
    <property type="pathway name" value="Aspirin ADME"/>
</dbReference>
<dbReference type="SignaLink" id="Q6NUN0"/>
<dbReference type="BioGRID-ORCS" id="54988">
    <property type="hits" value="10 hits in 1151 CRISPR screens"/>
</dbReference>
<dbReference type="ChiTaRS" id="ACSM5">
    <property type="organism name" value="human"/>
</dbReference>
<dbReference type="GenomeRNAi" id="54988"/>
<dbReference type="Pharos" id="Q6NUN0">
    <property type="development level" value="Tbio"/>
</dbReference>
<dbReference type="PRO" id="PR:Q6NUN0"/>
<dbReference type="Proteomes" id="UP000005640">
    <property type="component" value="Chromosome 16"/>
</dbReference>
<dbReference type="RNAct" id="Q6NUN0">
    <property type="molecule type" value="protein"/>
</dbReference>
<dbReference type="Bgee" id="ENSG00000183549">
    <property type="expression patterns" value="Expressed in right lobe of liver and 137 other cell types or tissues"/>
</dbReference>
<dbReference type="ExpressionAtlas" id="Q6NUN0">
    <property type="expression patterns" value="baseline and differential"/>
</dbReference>
<dbReference type="GO" id="GO:0005759">
    <property type="term" value="C:mitochondrial matrix"/>
    <property type="evidence" value="ECO:0000318"/>
    <property type="project" value="GO_Central"/>
</dbReference>
<dbReference type="GO" id="GO:0005739">
    <property type="term" value="C:mitochondrion"/>
    <property type="evidence" value="ECO:0006056"/>
    <property type="project" value="FlyBase"/>
</dbReference>
<dbReference type="GO" id="GO:0005524">
    <property type="term" value="F:ATP binding"/>
    <property type="evidence" value="ECO:0007669"/>
    <property type="project" value="UniProtKB-KW"/>
</dbReference>
<dbReference type="GO" id="GO:0015645">
    <property type="term" value="F:fatty acid ligase activity"/>
    <property type="evidence" value="ECO:0000318"/>
    <property type="project" value="GO_Central"/>
</dbReference>
<dbReference type="GO" id="GO:0004321">
    <property type="term" value="F:fatty-acyl-CoA synthase activity"/>
    <property type="evidence" value="ECO:0000318"/>
    <property type="project" value="GO_Central"/>
</dbReference>
<dbReference type="GO" id="GO:0005525">
    <property type="term" value="F:GTP binding"/>
    <property type="evidence" value="ECO:0007669"/>
    <property type="project" value="UniProtKB-KW"/>
</dbReference>
<dbReference type="GO" id="GO:0031956">
    <property type="term" value="F:medium-chain fatty acid-CoA ligase activity"/>
    <property type="evidence" value="ECO:0007669"/>
    <property type="project" value="UniProtKB-EC"/>
</dbReference>
<dbReference type="GO" id="GO:0046872">
    <property type="term" value="F:metal ion binding"/>
    <property type="evidence" value="ECO:0007669"/>
    <property type="project" value="UniProtKB-KW"/>
</dbReference>
<dbReference type="GO" id="GO:0006637">
    <property type="term" value="P:acyl-CoA metabolic process"/>
    <property type="evidence" value="ECO:0000318"/>
    <property type="project" value="GO_Central"/>
</dbReference>
<dbReference type="GO" id="GO:0006633">
    <property type="term" value="P:fatty acid biosynthetic process"/>
    <property type="evidence" value="ECO:0000318"/>
    <property type="project" value="GO_Central"/>
</dbReference>
<dbReference type="CDD" id="cd05928">
    <property type="entry name" value="MACS_euk"/>
    <property type="match status" value="1"/>
</dbReference>
<dbReference type="FunFam" id="3.40.50.12780:FF:000007">
    <property type="entry name" value="Acyl-coenzyme A synthetase ACSM2A, mitochondrial"/>
    <property type="match status" value="1"/>
</dbReference>
<dbReference type="FunFam" id="3.30.300.30:FF:000005">
    <property type="entry name" value="Acyl-coenzyme A synthetase ACSM5, mitochondrial"/>
    <property type="match status" value="1"/>
</dbReference>
<dbReference type="Gene3D" id="3.30.300.30">
    <property type="match status" value="1"/>
</dbReference>
<dbReference type="Gene3D" id="3.40.50.12780">
    <property type="entry name" value="N-terminal domain of ligase-like"/>
    <property type="match status" value="1"/>
</dbReference>
<dbReference type="InterPro" id="IPR025110">
    <property type="entry name" value="AMP-bd_C"/>
</dbReference>
<dbReference type="InterPro" id="IPR045851">
    <property type="entry name" value="AMP-bd_C_sf"/>
</dbReference>
<dbReference type="InterPro" id="IPR020845">
    <property type="entry name" value="AMP-binding_CS"/>
</dbReference>
<dbReference type="InterPro" id="IPR000873">
    <property type="entry name" value="AMP-dep_synth/lig_dom"/>
</dbReference>
<dbReference type="InterPro" id="IPR042099">
    <property type="entry name" value="ANL_N_sf"/>
</dbReference>
<dbReference type="InterPro" id="IPR051087">
    <property type="entry name" value="Mitochondrial_ACSM"/>
</dbReference>
<dbReference type="PANTHER" id="PTHR43605">
    <property type="entry name" value="ACYL-COENZYME A SYNTHETASE"/>
    <property type="match status" value="1"/>
</dbReference>
<dbReference type="PANTHER" id="PTHR43605:SF6">
    <property type="entry name" value="ACYL-COENZYME A SYNTHETASE ACSM5, MITOCHONDRIAL"/>
    <property type="match status" value="1"/>
</dbReference>
<dbReference type="Pfam" id="PF00501">
    <property type="entry name" value="AMP-binding"/>
    <property type="match status" value="1"/>
</dbReference>
<dbReference type="Pfam" id="PF13193">
    <property type="entry name" value="AMP-binding_C"/>
    <property type="match status" value="1"/>
</dbReference>
<dbReference type="SUPFAM" id="SSF56801">
    <property type="entry name" value="Acetyl-CoA synthetase-like"/>
    <property type="match status" value="1"/>
</dbReference>
<dbReference type="PROSITE" id="PS00455">
    <property type="entry name" value="AMP_BINDING"/>
    <property type="match status" value="1"/>
</dbReference>
<protein>
    <recommendedName>
        <fullName>Acyl-coenzyme A synthetase ACSM5, mitochondrial</fullName>
        <ecNumber evidence="2">6.2.1.2</ecNumber>
    </recommendedName>
    <alternativeName>
        <fullName>Acyl-CoA synthetase medium-chain family member 5</fullName>
    </alternativeName>
</protein>
<accession>Q6NUN0</accession>
<accession>Q96AV1</accession>
<accession>Q96CX8</accession>
<accession>Q9NWV3</accession>
<keyword id="KW-0007">Acetylation</keyword>
<keyword id="KW-0025">Alternative splicing</keyword>
<keyword id="KW-0067">ATP-binding</keyword>
<keyword id="KW-0276">Fatty acid metabolism</keyword>
<keyword id="KW-0342">GTP-binding</keyword>
<keyword id="KW-0436">Ligase</keyword>
<keyword id="KW-0443">Lipid metabolism</keyword>
<keyword id="KW-0460">Magnesium</keyword>
<keyword id="KW-0479">Metal-binding</keyword>
<keyword id="KW-0496">Mitochondrion</keyword>
<keyword id="KW-0547">Nucleotide-binding</keyword>
<keyword id="KW-1267">Proteomics identification</keyword>
<keyword id="KW-1185">Reference proteome</keyword>
<keyword id="KW-0809">Transit peptide</keyword>
<gene>
    <name type="primary">ACSM5</name>
    <name type="synonym">MACS3</name>
</gene>
<comment type="function">
    <text evidence="2">Catalyzes the activation of fatty acids by CoA to produce an acyl-CoA, the first step in fatty acid metabolism.</text>
</comment>
<comment type="catalytic activity">
    <reaction>
        <text>a medium-chain fatty acid + ATP + CoA = a medium-chain fatty acyl-CoA + AMP + diphosphate</text>
        <dbReference type="Rhea" id="RHEA:48340"/>
        <dbReference type="ChEBI" id="CHEBI:30616"/>
        <dbReference type="ChEBI" id="CHEBI:33019"/>
        <dbReference type="ChEBI" id="CHEBI:57287"/>
        <dbReference type="ChEBI" id="CHEBI:59558"/>
        <dbReference type="ChEBI" id="CHEBI:90546"/>
        <dbReference type="ChEBI" id="CHEBI:456215"/>
        <dbReference type="EC" id="6.2.1.2"/>
    </reaction>
    <physiologicalReaction direction="left-to-right" evidence="2">
        <dbReference type="Rhea" id="RHEA:48341"/>
    </physiologicalReaction>
</comment>
<comment type="cofactor">
    <cofactor evidence="2">
        <name>Mg(2+)</name>
        <dbReference type="ChEBI" id="CHEBI:18420"/>
    </cofactor>
    <cofactor evidence="2">
        <name>Mn(2+)</name>
        <dbReference type="ChEBI" id="CHEBI:29035"/>
    </cofactor>
</comment>
<comment type="subcellular location">
    <subcellularLocation>
        <location evidence="4">Mitochondrion matrix</location>
    </subcellularLocation>
</comment>
<comment type="alternative products">
    <event type="alternative splicing"/>
    <isoform>
        <id>Q6NUN0-1</id>
        <name>1</name>
        <sequence type="displayed"/>
    </isoform>
    <isoform>
        <id>Q6NUN0-2</id>
        <name>2</name>
        <sequence type="described" ref="VSP_028398"/>
    </isoform>
</comment>
<comment type="tissue specificity">
    <text evidence="6">Detected in kidney and liver.</text>
</comment>
<comment type="similarity">
    <text evidence="8">Belongs to the ATP-dependent AMP-binding enzyme family.</text>
</comment>
<comment type="sequence caution" evidence="8">
    <conflict type="frameshift">
        <sequence resource="EMBL-CDS" id="BAA91273"/>
    </conflict>
</comment>